<evidence type="ECO:0000250" key="1">
    <source>
        <dbReference type="UniProtKB" id="Q8IYU8"/>
    </source>
</evidence>
<evidence type="ECO:0000255" key="2"/>
<evidence type="ECO:0000255" key="3">
    <source>
        <dbReference type="PROSITE-ProRule" id="PRU00448"/>
    </source>
</evidence>
<evidence type="ECO:0000269" key="4">
    <source>
    </source>
</evidence>
<evidence type="ECO:0000269" key="5">
    <source>
    </source>
</evidence>
<evidence type="ECO:0000269" key="6">
    <source>
    </source>
</evidence>
<evidence type="ECO:0000269" key="7">
    <source>
    </source>
</evidence>
<evidence type="ECO:0000303" key="8">
    <source>
    </source>
</evidence>
<evidence type="ECO:0000305" key="9"/>
<evidence type="ECO:0000312" key="10">
    <source>
        <dbReference type="MGI" id="MGI:1915764"/>
    </source>
</evidence>
<evidence type="ECO:0007829" key="11">
    <source>
        <dbReference type="PDB" id="6EAZ"/>
    </source>
</evidence>
<gene>
    <name evidence="8 10" type="primary">Micu2</name>
    <name type="synonym">Efha1</name>
</gene>
<reference key="1">
    <citation type="journal article" date="2005" name="Science">
        <title>The transcriptional landscape of the mammalian genome.</title>
        <authorList>
            <person name="Carninci P."/>
            <person name="Kasukawa T."/>
            <person name="Katayama S."/>
            <person name="Gough J."/>
            <person name="Frith M.C."/>
            <person name="Maeda N."/>
            <person name="Oyama R."/>
            <person name="Ravasi T."/>
            <person name="Lenhard B."/>
            <person name="Wells C."/>
            <person name="Kodzius R."/>
            <person name="Shimokawa K."/>
            <person name="Bajic V.B."/>
            <person name="Brenner S.E."/>
            <person name="Batalov S."/>
            <person name="Forrest A.R."/>
            <person name="Zavolan M."/>
            <person name="Davis M.J."/>
            <person name="Wilming L.G."/>
            <person name="Aidinis V."/>
            <person name="Allen J.E."/>
            <person name="Ambesi-Impiombato A."/>
            <person name="Apweiler R."/>
            <person name="Aturaliya R.N."/>
            <person name="Bailey T.L."/>
            <person name="Bansal M."/>
            <person name="Baxter L."/>
            <person name="Beisel K.W."/>
            <person name="Bersano T."/>
            <person name="Bono H."/>
            <person name="Chalk A.M."/>
            <person name="Chiu K.P."/>
            <person name="Choudhary V."/>
            <person name="Christoffels A."/>
            <person name="Clutterbuck D.R."/>
            <person name="Crowe M.L."/>
            <person name="Dalla E."/>
            <person name="Dalrymple B.P."/>
            <person name="de Bono B."/>
            <person name="Della Gatta G."/>
            <person name="di Bernardo D."/>
            <person name="Down T."/>
            <person name="Engstrom P."/>
            <person name="Fagiolini M."/>
            <person name="Faulkner G."/>
            <person name="Fletcher C.F."/>
            <person name="Fukushima T."/>
            <person name="Furuno M."/>
            <person name="Futaki S."/>
            <person name="Gariboldi M."/>
            <person name="Georgii-Hemming P."/>
            <person name="Gingeras T.R."/>
            <person name="Gojobori T."/>
            <person name="Green R.E."/>
            <person name="Gustincich S."/>
            <person name="Harbers M."/>
            <person name="Hayashi Y."/>
            <person name="Hensch T.K."/>
            <person name="Hirokawa N."/>
            <person name="Hill D."/>
            <person name="Huminiecki L."/>
            <person name="Iacono M."/>
            <person name="Ikeo K."/>
            <person name="Iwama A."/>
            <person name="Ishikawa T."/>
            <person name="Jakt M."/>
            <person name="Kanapin A."/>
            <person name="Katoh M."/>
            <person name="Kawasawa Y."/>
            <person name="Kelso J."/>
            <person name="Kitamura H."/>
            <person name="Kitano H."/>
            <person name="Kollias G."/>
            <person name="Krishnan S.P."/>
            <person name="Kruger A."/>
            <person name="Kummerfeld S.K."/>
            <person name="Kurochkin I.V."/>
            <person name="Lareau L.F."/>
            <person name="Lazarevic D."/>
            <person name="Lipovich L."/>
            <person name="Liu J."/>
            <person name="Liuni S."/>
            <person name="McWilliam S."/>
            <person name="Madan Babu M."/>
            <person name="Madera M."/>
            <person name="Marchionni L."/>
            <person name="Matsuda H."/>
            <person name="Matsuzawa S."/>
            <person name="Miki H."/>
            <person name="Mignone F."/>
            <person name="Miyake S."/>
            <person name="Morris K."/>
            <person name="Mottagui-Tabar S."/>
            <person name="Mulder N."/>
            <person name="Nakano N."/>
            <person name="Nakauchi H."/>
            <person name="Ng P."/>
            <person name="Nilsson R."/>
            <person name="Nishiguchi S."/>
            <person name="Nishikawa S."/>
            <person name="Nori F."/>
            <person name="Ohara O."/>
            <person name="Okazaki Y."/>
            <person name="Orlando V."/>
            <person name="Pang K.C."/>
            <person name="Pavan W.J."/>
            <person name="Pavesi G."/>
            <person name="Pesole G."/>
            <person name="Petrovsky N."/>
            <person name="Piazza S."/>
            <person name="Reed J."/>
            <person name="Reid J.F."/>
            <person name="Ring B.Z."/>
            <person name="Ringwald M."/>
            <person name="Rost B."/>
            <person name="Ruan Y."/>
            <person name="Salzberg S.L."/>
            <person name="Sandelin A."/>
            <person name="Schneider C."/>
            <person name="Schoenbach C."/>
            <person name="Sekiguchi K."/>
            <person name="Semple C.A."/>
            <person name="Seno S."/>
            <person name="Sessa L."/>
            <person name="Sheng Y."/>
            <person name="Shibata Y."/>
            <person name="Shimada H."/>
            <person name="Shimada K."/>
            <person name="Silva D."/>
            <person name="Sinclair B."/>
            <person name="Sperling S."/>
            <person name="Stupka E."/>
            <person name="Sugiura K."/>
            <person name="Sultana R."/>
            <person name="Takenaka Y."/>
            <person name="Taki K."/>
            <person name="Tammoja K."/>
            <person name="Tan S.L."/>
            <person name="Tang S."/>
            <person name="Taylor M.S."/>
            <person name="Tegner J."/>
            <person name="Teichmann S.A."/>
            <person name="Ueda H.R."/>
            <person name="van Nimwegen E."/>
            <person name="Verardo R."/>
            <person name="Wei C.L."/>
            <person name="Yagi K."/>
            <person name="Yamanishi H."/>
            <person name="Zabarovsky E."/>
            <person name="Zhu S."/>
            <person name="Zimmer A."/>
            <person name="Hide W."/>
            <person name="Bult C."/>
            <person name="Grimmond S.M."/>
            <person name="Teasdale R.D."/>
            <person name="Liu E.T."/>
            <person name="Brusic V."/>
            <person name="Quackenbush J."/>
            <person name="Wahlestedt C."/>
            <person name="Mattick J.S."/>
            <person name="Hume D.A."/>
            <person name="Kai C."/>
            <person name="Sasaki D."/>
            <person name="Tomaru Y."/>
            <person name="Fukuda S."/>
            <person name="Kanamori-Katayama M."/>
            <person name="Suzuki M."/>
            <person name="Aoki J."/>
            <person name="Arakawa T."/>
            <person name="Iida J."/>
            <person name="Imamura K."/>
            <person name="Itoh M."/>
            <person name="Kato T."/>
            <person name="Kawaji H."/>
            <person name="Kawagashira N."/>
            <person name="Kawashima T."/>
            <person name="Kojima M."/>
            <person name="Kondo S."/>
            <person name="Konno H."/>
            <person name="Nakano K."/>
            <person name="Ninomiya N."/>
            <person name="Nishio T."/>
            <person name="Okada M."/>
            <person name="Plessy C."/>
            <person name="Shibata K."/>
            <person name="Shiraki T."/>
            <person name="Suzuki S."/>
            <person name="Tagami M."/>
            <person name="Waki K."/>
            <person name="Watahiki A."/>
            <person name="Okamura-Oho Y."/>
            <person name="Suzuki H."/>
            <person name="Kawai J."/>
            <person name="Hayashizaki Y."/>
        </authorList>
    </citation>
    <scope>NUCLEOTIDE SEQUENCE [LARGE SCALE MRNA]</scope>
    <source>
        <strain>C57BL/6J</strain>
        <tissue>Head</tissue>
        <tissue>Placenta</tissue>
        <tissue>Testis</tissue>
    </source>
</reference>
<reference key="2">
    <citation type="journal article" date="2004" name="Genome Res.">
        <title>The status, quality, and expansion of the NIH full-length cDNA project: the Mammalian Gene Collection (MGC).</title>
        <authorList>
            <consortium name="The MGC Project Team"/>
        </authorList>
    </citation>
    <scope>NUCLEOTIDE SEQUENCE [LARGE SCALE MRNA]</scope>
    <source>
        <strain>FVB/N</strain>
        <tissue>Colon</tissue>
    </source>
</reference>
<reference key="3">
    <citation type="journal article" date="2010" name="Cell">
        <title>A tissue-specific atlas of mouse protein phosphorylation and expression.</title>
        <authorList>
            <person name="Huttlin E.L."/>
            <person name="Jedrychowski M.P."/>
            <person name="Elias J.E."/>
            <person name="Goswami T."/>
            <person name="Rad R."/>
            <person name="Beausoleil S.A."/>
            <person name="Villen J."/>
            <person name="Haas W."/>
            <person name="Sowa M.E."/>
            <person name="Gygi S.P."/>
        </authorList>
    </citation>
    <scope>IDENTIFICATION BY MASS SPECTROMETRY [LARGE SCALE ANALYSIS]</scope>
    <source>
        <tissue>Spleen</tissue>
        <tissue>Testis</tissue>
    </source>
</reference>
<reference key="4">
    <citation type="journal article" date="2013" name="PLoS ONE">
        <title>MICU2, a paralog of MICU1, resides within the mitochondrial uniporter complex to regulate calcium handling.</title>
        <authorList>
            <person name="Plovanich M."/>
            <person name="Bogorad R.L."/>
            <person name="Sancak Y."/>
            <person name="Kamer K.J."/>
            <person name="Strittmatter L."/>
            <person name="Li A.A."/>
            <person name="Girgis H.S."/>
            <person name="Kuchimanchi S."/>
            <person name="De Groot J."/>
            <person name="Speciner L."/>
            <person name="Taneja N."/>
            <person name="Oshea J."/>
            <person name="Koteliansky V."/>
            <person name="Mootha V.K."/>
        </authorList>
    </citation>
    <scope>FUNCTION</scope>
    <scope>IDENTIFICATION IN A COMPLEX WITH MCU AND MICU1</scope>
    <scope>SUBCELLULAR LOCATION</scope>
    <scope>TISSUE SPECIFICITY</scope>
</reference>
<reference key="5">
    <citation type="journal article" date="2014" name="Mol. Cell">
        <title>MICU1 and MICU2 finely tune the mitochondrial Ca(2+) uniporter by exerting opposite effects on MCU activity.</title>
        <authorList>
            <person name="Patron M."/>
            <person name="Checchetto V."/>
            <person name="Raffaello A."/>
            <person name="Teardo E."/>
            <person name="Vecellio Reane D."/>
            <person name="Mantoan M."/>
            <person name="Granatiero V."/>
            <person name="Szabo I."/>
            <person name="De Stefani D."/>
            <person name="Rizzuto R."/>
        </authorList>
    </citation>
    <scope>FUNCTION</scope>
    <scope>CALCIUM-BINDING</scope>
    <scope>INTERACTION WITH MICU1</scope>
    <scope>MUTAGENESIS OF ASP-372 AND CYS-410</scope>
</reference>
<reference key="6">
    <citation type="journal article" date="2017" name="Proc. Natl. Acad. Sci. U.S.A.">
        <title>Cardiovascular homeostasis dependence on MICU2, a regulatory subunit of the mitochondrial calcium uniporter.</title>
        <authorList>
            <person name="Bick A.G."/>
            <person name="Wakimoto H."/>
            <person name="Kamer K.J."/>
            <person name="Sancak Y."/>
            <person name="Goldberger O."/>
            <person name="Axelsson A."/>
            <person name="DeLaughter D.M."/>
            <person name="Gorham J.M."/>
            <person name="Mootha V.K."/>
            <person name="Seidman J.G."/>
            <person name="Seidman C.E."/>
        </authorList>
    </citation>
    <scope>DISRUPTION PHENOTYPE</scope>
</reference>
<reference key="7">
    <citation type="journal article" date="2019" name="Proc. Natl. Acad. Sci. U.S.A.">
        <title>Crystal structure of MICU2 and comparison with MICU1 reveal insights into the uniporter gating mechanism.</title>
        <authorList>
            <person name="Kamer K.J."/>
            <person name="Jiang W."/>
            <person name="Kaushik V.K."/>
            <person name="Mootha V.K."/>
            <person name="Grabarek Z."/>
        </authorList>
    </citation>
    <scope>X-RAY CRYSTALLOGRAPHY (2.50 ANGSTROMS) OF 68-432</scope>
    <scope>IDENTIFICATION IN THE UNIPLEX COMPLEX</scope>
</reference>
<feature type="transit peptide" description="Mitochondrion" evidence="2">
    <location>
        <begin position="1"/>
        <end position="22"/>
    </location>
</feature>
<feature type="chain" id="PRO_0000251218" description="Calcium uptake protein 2, mitochondrial">
    <location>
        <begin position="23"/>
        <end position="432"/>
    </location>
</feature>
<feature type="domain" description="EF-hand 1" evidence="3">
    <location>
        <begin position="169"/>
        <end position="204"/>
    </location>
</feature>
<feature type="domain" description="EF-hand 2; degenerate" evidence="3">
    <location>
        <begin position="224"/>
        <end position="259"/>
    </location>
</feature>
<feature type="domain" description="EF-hand 3; degenerate" evidence="3">
    <location>
        <begin position="290"/>
        <end position="325"/>
    </location>
</feature>
<feature type="domain" description="EF-hand 4" evidence="3">
    <location>
        <begin position="359"/>
        <end position="394"/>
    </location>
</feature>
<feature type="binding site" evidence="1">
    <location>
        <position position="182"/>
    </location>
    <ligand>
        <name>Ca(2+)</name>
        <dbReference type="ChEBI" id="CHEBI:29108"/>
        <label>1</label>
    </ligand>
</feature>
<feature type="binding site" evidence="1">
    <location>
        <position position="184"/>
    </location>
    <ligand>
        <name>Ca(2+)</name>
        <dbReference type="ChEBI" id="CHEBI:29108"/>
        <label>1</label>
    </ligand>
</feature>
<feature type="binding site" evidence="1">
    <location>
        <position position="186"/>
    </location>
    <ligand>
        <name>Ca(2+)</name>
        <dbReference type="ChEBI" id="CHEBI:29108"/>
        <label>1</label>
    </ligand>
</feature>
<feature type="binding site" evidence="1">
    <location>
        <position position="188"/>
    </location>
    <ligand>
        <name>Ca(2+)</name>
        <dbReference type="ChEBI" id="CHEBI:29108"/>
        <label>1</label>
    </ligand>
</feature>
<feature type="binding site" evidence="1">
    <location>
        <position position="190"/>
    </location>
    <ligand>
        <name>Ca(2+)</name>
        <dbReference type="ChEBI" id="CHEBI:29108"/>
        <label>1</label>
    </ligand>
</feature>
<feature type="binding site" evidence="1">
    <location>
        <position position="193"/>
    </location>
    <ligand>
        <name>Ca(2+)</name>
        <dbReference type="ChEBI" id="CHEBI:29108"/>
        <label>1</label>
    </ligand>
</feature>
<feature type="binding site" evidence="1">
    <location>
        <position position="372"/>
    </location>
    <ligand>
        <name>Ca(2+)</name>
        <dbReference type="ChEBI" id="CHEBI:29108"/>
        <label>2</label>
    </ligand>
</feature>
<feature type="binding site" evidence="1">
    <location>
        <position position="374"/>
    </location>
    <ligand>
        <name>Ca(2+)</name>
        <dbReference type="ChEBI" id="CHEBI:29108"/>
        <label>2</label>
    </ligand>
</feature>
<feature type="binding site" evidence="1">
    <location>
        <position position="376"/>
    </location>
    <ligand>
        <name>Ca(2+)</name>
        <dbReference type="ChEBI" id="CHEBI:29108"/>
        <label>2</label>
    </ligand>
</feature>
<feature type="binding site" evidence="1">
    <location>
        <position position="378"/>
    </location>
    <ligand>
        <name>Ca(2+)</name>
        <dbReference type="ChEBI" id="CHEBI:29108"/>
        <label>2</label>
    </ligand>
</feature>
<feature type="binding site" evidence="1">
    <location>
        <position position="383"/>
    </location>
    <ligand>
        <name>Ca(2+)</name>
        <dbReference type="ChEBI" id="CHEBI:29108"/>
        <label>2</label>
    </ligand>
</feature>
<feature type="modified residue" description="Phosphoserine" evidence="1">
    <location>
        <position position="202"/>
    </location>
</feature>
<feature type="disulfide bond" description="Interchain (with C-465 in MICU1)" evidence="5">
    <location>
        <position position="410"/>
    </location>
</feature>
<feature type="mutagenesis site" description="Strong reduction of mitochondrial Ca(2+) peaks." evidence="5">
    <original>D</original>
    <variation>A</variation>
    <location>
        <position position="372"/>
    </location>
</feature>
<feature type="mutagenesis site" description="Abolishes interaction with MICU2." evidence="5">
    <original>C</original>
    <variation>A</variation>
    <location>
        <position position="410"/>
    </location>
</feature>
<feature type="sequence conflict" description="In Ref. 1; BAE39401." evidence="9" ref="1">
    <original>W</original>
    <variation>G</variation>
    <location>
        <position position="14"/>
    </location>
</feature>
<feature type="sequence conflict" description="In Ref. 1; BAC27516." evidence="9" ref="1">
    <original>E</original>
    <variation>K</variation>
    <location>
        <position position="241"/>
    </location>
</feature>
<feature type="strand" evidence="11">
    <location>
        <begin position="78"/>
        <end position="81"/>
    </location>
</feature>
<feature type="helix" evidence="11">
    <location>
        <begin position="83"/>
        <end position="90"/>
    </location>
</feature>
<feature type="strand" evidence="11">
    <location>
        <begin position="93"/>
        <end position="95"/>
    </location>
</feature>
<feature type="strand" evidence="11">
    <location>
        <begin position="98"/>
        <end position="101"/>
    </location>
</feature>
<feature type="helix" evidence="11">
    <location>
        <begin position="103"/>
        <end position="111"/>
    </location>
</feature>
<feature type="helix" evidence="11">
    <location>
        <begin position="126"/>
        <end position="132"/>
    </location>
</feature>
<feature type="turn" evidence="11">
    <location>
        <begin position="133"/>
        <end position="135"/>
    </location>
</feature>
<feature type="helix" evidence="11">
    <location>
        <begin position="145"/>
        <end position="149"/>
    </location>
</feature>
<feature type="helix" evidence="11">
    <location>
        <begin position="157"/>
        <end position="168"/>
    </location>
</feature>
<feature type="helix" evidence="11">
    <location>
        <begin position="175"/>
        <end position="181"/>
    </location>
</feature>
<feature type="strand" evidence="11">
    <location>
        <begin position="185"/>
        <end position="189"/>
    </location>
</feature>
<feature type="helix" evidence="11">
    <location>
        <begin position="191"/>
        <end position="193"/>
    </location>
</feature>
<feature type="helix" evidence="11">
    <location>
        <begin position="194"/>
        <end position="201"/>
    </location>
</feature>
<feature type="helix" evidence="11">
    <location>
        <begin position="230"/>
        <end position="236"/>
    </location>
</feature>
<feature type="turn" evidence="11">
    <location>
        <begin position="237"/>
        <end position="240"/>
    </location>
</feature>
<feature type="helix" evidence="11">
    <location>
        <begin position="246"/>
        <end position="268"/>
    </location>
</feature>
<feature type="turn" evidence="11">
    <location>
        <begin position="269"/>
        <end position="271"/>
    </location>
</feature>
<feature type="strand" evidence="11">
    <location>
        <begin position="272"/>
        <end position="276"/>
    </location>
</feature>
<feature type="helix" evidence="11">
    <location>
        <begin position="277"/>
        <end position="284"/>
    </location>
</feature>
<feature type="turn" evidence="11">
    <location>
        <begin position="285"/>
        <end position="287"/>
    </location>
</feature>
<feature type="helix" evidence="11">
    <location>
        <begin position="293"/>
        <end position="304"/>
    </location>
</feature>
<feature type="helix" evidence="11">
    <location>
        <begin position="312"/>
        <end position="323"/>
    </location>
</feature>
<feature type="helix" evidence="11">
    <location>
        <begin position="325"/>
        <end position="336"/>
    </location>
</feature>
<feature type="turn" evidence="11">
    <location>
        <begin position="337"/>
        <end position="339"/>
    </location>
</feature>
<feature type="helix" evidence="11">
    <location>
        <begin position="344"/>
        <end position="355"/>
    </location>
</feature>
<feature type="helix" evidence="11">
    <location>
        <begin position="361"/>
        <end position="370"/>
    </location>
</feature>
<feature type="strand" evidence="11">
    <location>
        <begin position="374"/>
        <end position="377"/>
    </location>
</feature>
<feature type="helix" evidence="11">
    <location>
        <begin position="381"/>
        <end position="393"/>
    </location>
</feature>
<feature type="strand" evidence="11">
    <location>
        <begin position="397"/>
        <end position="400"/>
    </location>
</feature>
<feature type="helix" evidence="11">
    <location>
        <begin position="403"/>
        <end position="422"/>
    </location>
</feature>
<feature type="turn" evidence="11">
    <location>
        <begin position="423"/>
        <end position="425"/>
    </location>
</feature>
<accession>Q8CD10</accession>
<accession>Q3TJU4</accession>
<accession>Q8K0K2</accession>
<accession>Q9CUR8</accession>
<proteinExistence type="evidence at protein level"/>
<name>MICU2_MOUSE</name>
<comment type="function">
    <text evidence="1 4 5">Calcium sensor of the mitochondrial calcium uniporter (MCU) channel, which senses calcium level via its EF-hand domains (PubMed:23409044, PubMed:24560927). MICU1 and MICU2 form a disulfide-linked heterodimer that stimulates and inhibits MCU activity, depending on the concentration of calcium (PubMed:24560927). At low calcium levels, MICU1 occludes the pore of the MCU channel, preventing mitochondrial calcium uptake (By similarity). At higher calcium levels, calcium-binding to MICU1 and MICU2 induces a conformational change that weakens MCU-MICU1 interactions and moves the MICU1-MICU2 heterodimer away from the pore, allowing calcium permeation through the MCU channel (By similarity).</text>
</comment>
<comment type="subunit">
    <text evidence="4 5 7">Heterodimer; disulfide-linked; heterodimerizes with MICU1 (PubMed:23409044, PubMed:24560927). Component of the uniplex complex, composed of MCU, EMRE/SMDT1, MICU1 and MICU2 in a 4:4:1:1 stoichiometry (PubMed:30755530).</text>
</comment>
<comment type="subcellular location">
    <subcellularLocation>
        <location evidence="4">Mitochondrion intermembrane space</location>
    </subcellularLocation>
    <subcellularLocation>
        <location evidence="1">Mitochondrion inner membrane</location>
    </subcellularLocation>
    <text evidence="1">Recruited to the mitochondrial inner membrane via its association with the uniplex complex.</text>
</comment>
<comment type="tissue specificity">
    <text evidence="4">Predominantly expressed in stomach, intestine, skeletal muscle, kidney, heart, testis, prostate and uterus.</text>
</comment>
<comment type="domain">
    <text evidence="1 5">EF-hand domains 1 and 4 have high affinity for calcium and act as sensors of mitochondrial matrix calcium levels (PubMed:24560927). EF-hand domains 2 and 3 are degenerate (By similarity).</text>
</comment>
<comment type="disruption phenotype">
    <text evidence="6">Mice display diastolic dysfunction, characterized by left atrial enlargement and delayed sarcomere relaxation and cytosolic calcium reuptake kinetics in cardiomyocytes (PubMed:29073106). A significant proportion of mice die from abdominal aortic rupture (PubMed:29073106).</text>
</comment>
<comment type="similarity">
    <text evidence="9">Belongs to the MICU1 family. MICU2 subfamily.</text>
</comment>
<organism>
    <name type="scientific">Mus musculus</name>
    <name type="common">Mouse</name>
    <dbReference type="NCBI Taxonomy" id="10090"/>
    <lineage>
        <taxon>Eukaryota</taxon>
        <taxon>Metazoa</taxon>
        <taxon>Chordata</taxon>
        <taxon>Craniata</taxon>
        <taxon>Vertebrata</taxon>
        <taxon>Euteleostomi</taxon>
        <taxon>Mammalia</taxon>
        <taxon>Eutheria</taxon>
        <taxon>Euarchontoglires</taxon>
        <taxon>Glires</taxon>
        <taxon>Rodentia</taxon>
        <taxon>Myomorpha</taxon>
        <taxon>Muroidea</taxon>
        <taxon>Muridae</taxon>
        <taxon>Murinae</taxon>
        <taxon>Mus</taxon>
        <taxon>Mus</taxon>
    </lineage>
</organism>
<keyword id="KW-0002">3D-structure</keyword>
<keyword id="KW-0106">Calcium</keyword>
<keyword id="KW-1015">Disulfide bond</keyword>
<keyword id="KW-0472">Membrane</keyword>
<keyword id="KW-0479">Metal-binding</keyword>
<keyword id="KW-0496">Mitochondrion</keyword>
<keyword id="KW-0999">Mitochondrion inner membrane</keyword>
<keyword id="KW-0597">Phosphoprotein</keyword>
<keyword id="KW-1185">Reference proteome</keyword>
<keyword id="KW-0677">Repeat</keyword>
<keyword id="KW-0809">Transit peptide</keyword>
<dbReference type="EMBL" id="AK014778">
    <property type="protein sequence ID" value="BAB29548.1"/>
    <property type="molecule type" value="mRNA"/>
</dbReference>
<dbReference type="EMBL" id="AK031692">
    <property type="protein sequence ID" value="BAC27516.1"/>
    <property type="molecule type" value="mRNA"/>
</dbReference>
<dbReference type="EMBL" id="AK167296">
    <property type="protein sequence ID" value="BAE39401.1"/>
    <property type="molecule type" value="mRNA"/>
</dbReference>
<dbReference type="EMBL" id="BC031172">
    <property type="protein sequence ID" value="AAH31172.1"/>
    <property type="molecule type" value="mRNA"/>
</dbReference>
<dbReference type="CCDS" id="CCDS27163.1"/>
<dbReference type="RefSeq" id="NP_082919.1">
    <property type="nucleotide sequence ID" value="NM_028643.4"/>
</dbReference>
<dbReference type="PDB" id="6EAZ">
    <property type="method" value="X-ray"/>
    <property type="resolution" value="2.50 A"/>
    <property type="chains" value="A/B=68-432"/>
</dbReference>
<dbReference type="PDBsum" id="6EAZ"/>
<dbReference type="SMR" id="Q8CD10"/>
<dbReference type="BioGRID" id="212898">
    <property type="interactions" value="1"/>
</dbReference>
<dbReference type="FunCoup" id="Q8CD10">
    <property type="interactions" value="762"/>
</dbReference>
<dbReference type="STRING" id="10090.ENSMUSP00000022543"/>
<dbReference type="GlyGen" id="Q8CD10">
    <property type="glycosylation" value="1 site"/>
</dbReference>
<dbReference type="iPTMnet" id="Q8CD10"/>
<dbReference type="PhosphoSitePlus" id="Q8CD10"/>
<dbReference type="SwissPalm" id="Q8CD10"/>
<dbReference type="PaxDb" id="10090-ENSMUSP00000022543"/>
<dbReference type="PeptideAtlas" id="Q8CD10"/>
<dbReference type="ProteomicsDB" id="292323"/>
<dbReference type="Pumba" id="Q8CD10"/>
<dbReference type="Antibodypedia" id="22397">
    <property type="antibodies" value="117 antibodies from 19 providers"/>
</dbReference>
<dbReference type="DNASU" id="68514"/>
<dbReference type="Ensembl" id="ENSMUST00000022543.10">
    <property type="protein sequence ID" value="ENSMUSP00000022543.9"/>
    <property type="gene ID" value="ENSMUSG00000021973.10"/>
</dbReference>
<dbReference type="GeneID" id="68514"/>
<dbReference type="KEGG" id="mmu:68514"/>
<dbReference type="UCSC" id="uc007udv.1">
    <property type="organism name" value="mouse"/>
</dbReference>
<dbReference type="AGR" id="MGI:1915764"/>
<dbReference type="CTD" id="221154"/>
<dbReference type="MGI" id="MGI:1915764">
    <property type="gene designation" value="Micu2"/>
</dbReference>
<dbReference type="VEuPathDB" id="HostDB:ENSMUSG00000021973"/>
<dbReference type="eggNOG" id="KOG2643">
    <property type="taxonomic scope" value="Eukaryota"/>
</dbReference>
<dbReference type="GeneTree" id="ENSGT00950000183079"/>
<dbReference type="HOGENOM" id="CLU_027103_0_1_1"/>
<dbReference type="InParanoid" id="Q8CD10"/>
<dbReference type="OMA" id="LKYQEFH"/>
<dbReference type="OrthoDB" id="5859791at2759"/>
<dbReference type="PhylomeDB" id="Q8CD10"/>
<dbReference type="TreeFam" id="TF320374"/>
<dbReference type="Reactome" id="R-MMU-8949215">
    <property type="pathway name" value="Mitochondrial calcium ion transport"/>
</dbReference>
<dbReference type="Reactome" id="R-MMU-8949664">
    <property type="pathway name" value="Processing of SMDT1"/>
</dbReference>
<dbReference type="BioGRID-ORCS" id="68514">
    <property type="hits" value="2 hits in 77 CRISPR screens"/>
</dbReference>
<dbReference type="ChiTaRS" id="Micu2">
    <property type="organism name" value="mouse"/>
</dbReference>
<dbReference type="PRO" id="PR:Q8CD10"/>
<dbReference type="Proteomes" id="UP000000589">
    <property type="component" value="Chromosome 14"/>
</dbReference>
<dbReference type="RNAct" id="Q8CD10">
    <property type="molecule type" value="protein"/>
</dbReference>
<dbReference type="Bgee" id="ENSMUSG00000021973">
    <property type="expression patterns" value="Expressed in manus and 230 other cell types or tissues"/>
</dbReference>
<dbReference type="GO" id="GO:0034704">
    <property type="term" value="C:calcium channel complex"/>
    <property type="evidence" value="ECO:0000314"/>
    <property type="project" value="UniProtKB"/>
</dbReference>
<dbReference type="GO" id="GO:0005743">
    <property type="term" value="C:mitochondrial inner membrane"/>
    <property type="evidence" value="ECO:0000250"/>
    <property type="project" value="UniProtKB"/>
</dbReference>
<dbReference type="GO" id="GO:0005758">
    <property type="term" value="C:mitochondrial intermembrane space"/>
    <property type="evidence" value="ECO:0000250"/>
    <property type="project" value="UniProtKB"/>
</dbReference>
<dbReference type="GO" id="GO:0005739">
    <property type="term" value="C:mitochondrion"/>
    <property type="evidence" value="ECO:0000315"/>
    <property type="project" value="UniProtKB"/>
</dbReference>
<dbReference type="GO" id="GO:1990246">
    <property type="term" value="C:uniplex complex"/>
    <property type="evidence" value="ECO:0000250"/>
    <property type="project" value="UniProtKB"/>
</dbReference>
<dbReference type="GO" id="GO:0005246">
    <property type="term" value="F:calcium channel regulator activity"/>
    <property type="evidence" value="ECO:0007669"/>
    <property type="project" value="Ensembl"/>
</dbReference>
<dbReference type="GO" id="GO:0005509">
    <property type="term" value="F:calcium ion binding"/>
    <property type="evidence" value="ECO:0000315"/>
    <property type="project" value="UniProtKB"/>
</dbReference>
<dbReference type="GO" id="GO:0061891">
    <property type="term" value="F:calcium ion sensor activity"/>
    <property type="evidence" value="ECO:0000250"/>
    <property type="project" value="UniProtKB"/>
</dbReference>
<dbReference type="GO" id="GO:0046982">
    <property type="term" value="F:protein heterodimerization activity"/>
    <property type="evidence" value="ECO:0000353"/>
    <property type="project" value="UniProtKB"/>
</dbReference>
<dbReference type="GO" id="GO:0036444">
    <property type="term" value="P:calcium import into the mitochondrion"/>
    <property type="evidence" value="ECO:0000250"/>
    <property type="project" value="UniProtKB"/>
</dbReference>
<dbReference type="GO" id="GO:0071277">
    <property type="term" value="P:cellular response to calcium ion"/>
    <property type="evidence" value="ECO:0007669"/>
    <property type="project" value="Ensembl"/>
</dbReference>
<dbReference type="GO" id="GO:0006851">
    <property type="term" value="P:mitochondrial calcium ion transmembrane transport"/>
    <property type="evidence" value="ECO:0000315"/>
    <property type="project" value="UniProtKB"/>
</dbReference>
<dbReference type="GO" id="GO:0051562">
    <property type="term" value="P:negative regulation of mitochondrial calcium ion concentration"/>
    <property type="evidence" value="ECO:0000250"/>
    <property type="project" value="UniProtKB"/>
</dbReference>
<dbReference type="GO" id="GO:0051561">
    <property type="term" value="P:positive regulation of mitochondrial calcium ion concentration"/>
    <property type="evidence" value="ECO:0000315"/>
    <property type="project" value="UniProtKB"/>
</dbReference>
<dbReference type="CDD" id="cd16174">
    <property type="entry name" value="EFh_MICU2"/>
    <property type="match status" value="1"/>
</dbReference>
<dbReference type="FunFam" id="1.10.238.10:FF:000149">
    <property type="entry name" value="Mitochondrial calcium uptake family member 3"/>
    <property type="match status" value="1"/>
</dbReference>
<dbReference type="FunFam" id="1.10.238.10:FF:000211">
    <property type="entry name" value="Mitochondrial calcium uptake family member 3"/>
    <property type="match status" value="1"/>
</dbReference>
<dbReference type="Gene3D" id="1.10.238.10">
    <property type="entry name" value="EF-hand"/>
    <property type="match status" value="2"/>
</dbReference>
<dbReference type="InterPro" id="IPR011992">
    <property type="entry name" value="EF-hand-dom_pair"/>
</dbReference>
<dbReference type="InterPro" id="IPR002048">
    <property type="entry name" value="EF_hand_dom"/>
</dbReference>
<dbReference type="InterPro" id="IPR039800">
    <property type="entry name" value="MICU1/2/3"/>
</dbReference>
<dbReference type="PANTHER" id="PTHR12294:SF3">
    <property type="entry name" value="CALCIUM UPTAKE PROTEIN 2, MITOCHONDRIAL"/>
    <property type="match status" value="1"/>
</dbReference>
<dbReference type="PANTHER" id="PTHR12294">
    <property type="entry name" value="EF HAND DOMAIN FAMILY A1,A2-RELATED"/>
    <property type="match status" value="1"/>
</dbReference>
<dbReference type="SMART" id="SM00054">
    <property type="entry name" value="EFh"/>
    <property type="match status" value="2"/>
</dbReference>
<dbReference type="SUPFAM" id="SSF47473">
    <property type="entry name" value="EF-hand"/>
    <property type="match status" value="2"/>
</dbReference>
<dbReference type="PROSITE" id="PS50222">
    <property type="entry name" value="EF_HAND_2"/>
    <property type="match status" value="4"/>
</dbReference>
<protein>
    <recommendedName>
        <fullName evidence="9">Calcium uptake protein 2, mitochondrial</fullName>
    </recommendedName>
    <alternativeName>
        <fullName>EF-hand domain-containing family member A1</fullName>
    </alternativeName>
</protein>
<sequence>MAAAAGRSAWLAAWGGRLRRGLAAGRRAVPTRGPLAAAVAGVALAGAGAAWHHGRVKAAAREGSRTVSAQKNYLGPIEKLSLRKQRFMQFSSLEHDGEYYMTPRDFLFSVMFEQVERKTLVKKLAKKDIEDVLSGIQTARCGSTFFRDLGDKGVISYTEYLFLLTILTKPHSGFHVAFKMLDVDGNEMIERKEFVKLQKIISKQDGFKTVKTNETEYQDPTVKEPGVNTTLQVRFFGKRGEKKLHYKEFRRFMENLQTEVQEMEFLQFSKGLNFMRKEDFAEWLLFFTNTENKDIYWRNVREKLSVGESISLDEFKSFCHFTTHLEDFAIAMQMFSLAHRPVRLAEFKRAVKVATGQELSDNLLDTVFKIFDLDGDECLSHGEFLGVLKNRMHRGLWVSQQQSVQEYWKCVKKESIKGVKEAWRQQAGKGPF</sequence>